<proteinExistence type="evidence at transcript level"/>
<feature type="chain" id="PRO_0000262462" description="T-box transcription factor TBX1">
    <location>
        <begin position="1"/>
        <end position="463"/>
    </location>
</feature>
<feature type="DNA-binding region" description="T-box" evidence="4">
    <location>
        <begin position="119"/>
        <end position="297"/>
    </location>
</feature>
<feature type="region of interest" description="Disordered" evidence="5">
    <location>
        <begin position="39"/>
        <end position="58"/>
    </location>
</feature>
<feature type="region of interest" description="Disordered" evidence="5">
    <location>
        <begin position="75"/>
        <end position="103"/>
    </location>
</feature>
<feature type="region of interest" description="Disordered" evidence="5">
    <location>
        <begin position="320"/>
        <end position="354"/>
    </location>
</feature>
<feature type="region of interest" description="Disordered" evidence="5">
    <location>
        <begin position="367"/>
        <end position="405"/>
    </location>
</feature>
<feature type="short sequence motif" description="Nuclear localization signal" evidence="3">
    <location>
        <begin position="420"/>
        <end position="431"/>
    </location>
</feature>
<feature type="compositionally biased region" description="Low complexity" evidence="5">
    <location>
        <begin position="75"/>
        <end position="97"/>
    </location>
</feature>
<feature type="compositionally biased region" description="Polar residues" evidence="5">
    <location>
        <begin position="323"/>
        <end position="332"/>
    </location>
</feature>
<feature type="compositionally biased region" description="Basic and acidic residues" evidence="5">
    <location>
        <begin position="333"/>
        <end position="347"/>
    </location>
</feature>
<feature type="compositionally biased region" description="Low complexity" evidence="5">
    <location>
        <begin position="367"/>
        <end position="380"/>
    </location>
</feature>
<evidence type="ECO:0000250" key="1"/>
<evidence type="ECO:0000250" key="2">
    <source>
        <dbReference type="UniProtKB" id="O43435"/>
    </source>
</evidence>
<evidence type="ECO:0000250" key="3">
    <source>
        <dbReference type="UniProtKB" id="P70323"/>
    </source>
</evidence>
<evidence type="ECO:0000255" key="4">
    <source>
        <dbReference type="PROSITE-ProRule" id="PRU00201"/>
    </source>
</evidence>
<evidence type="ECO:0000256" key="5">
    <source>
        <dbReference type="SAM" id="MobiDB-lite"/>
    </source>
</evidence>
<evidence type="ECO:0000269" key="6">
    <source>
    </source>
</evidence>
<reference key="1">
    <citation type="journal article" date="2006" name="Dev. Dyn.">
        <title>Developmental expression patterns of Tb x 1, Tb x 2, Tb x 5, and Tb x 20 in Xenopus tropicalis.</title>
        <authorList>
            <person name="Showell C."/>
            <person name="Christine K.S."/>
            <person name="Mandel E.M."/>
            <person name="Conlon F.L."/>
        </authorList>
    </citation>
    <scope>NUCLEOTIDE SEQUENCE [MRNA]</scope>
    <scope>DEVELOPMENTAL STAGE</scope>
</reference>
<reference key="2">
    <citation type="submission" date="2006-10" db="EMBL/GenBank/DDBJ databases">
        <authorList>
            <consortium name="Sanger Xenopus tropicalis EST/cDNA project"/>
        </authorList>
    </citation>
    <scope>NUCLEOTIDE SEQUENCE [LARGE SCALE MRNA]</scope>
    <source>
        <tissue>Neurula</tissue>
    </source>
</reference>
<accession>Q3SA49</accession>
<dbReference type="EMBL" id="DQ124205">
    <property type="protein sequence ID" value="AAZ79650.1"/>
    <property type="molecule type" value="mRNA"/>
</dbReference>
<dbReference type="EMBL" id="CR926197">
    <property type="protein sequence ID" value="CAJ83100.1"/>
    <property type="molecule type" value="mRNA"/>
</dbReference>
<dbReference type="RefSeq" id="NP_001030290.1">
    <property type="nucleotide sequence ID" value="NM_001035118.1"/>
</dbReference>
<dbReference type="SMR" id="Q3SA49"/>
<dbReference type="FunCoup" id="Q3SA49">
    <property type="interactions" value="713"/>
</dbReference>
<dbReference type="STRING" id="8364.ENSXETP00000040852"/>
<dbReference type="PaxDb" id="8364-ENSXETP00000013817"/>
<dbReference type="GeneID" id="619587"/>
<dbReference type="KEGG" id="xtr:619587"/>
<dbReference type="AGR" id="Xenbase:XB-GENE-478084"/>
<dbReference type="CTD" id="6899"/>
<dbReference type="Xenbase" id="XB-GENE-478084">
    <property type="gene designation" value="tbx1"/>
</dbReference>
<dbReference type="eggNOG" id="KOG3586">
    <property type="taxonomic scope" value="Eukaryota"/>
</dbReference>
<dbReference type="HOGENOM" id="CLU_014430_9_1_1"/>
<dbReference type="InParanoid" id="Q3SA49"/>
<dbReference type="OMA" id="CKMHYST"/>
<dbReference type="OrthoDB" id="7442607at2759"/>
<dbReference type="PhylomeDB" id="Q3SA49"/>
<dbReference type="TreeFam" id="TF106341"/>
<dbReference type="Proteomes" id="UP000008143">
    <property type="component" value="Chromosome 1"/>
</dbReference>
<dbReference type="Bgee" id="ENSXETG00000039391">
    <property type="expression patterns" value="Expressed in neurula embryo and 5 other cell types or tissues"/>
</dbReference>
<dbReference type="GO" id="GO:0005634">
    <property type="term" value="C:nucleus"/>
    <property type="evidence" value="ECO:0007669"/>
    <property type="project" value="UniProtKB-SubCell"/>
</dbReference>
<dbReference type="GO" id="GO:0003700">
    <property type="term" value="F:DNA-binding transcription factor activity"/>
    <property type="evidence" value="ECO:0000250"/>
    <property type="project" value="UniProtKB"/>
</dbReference>
<dbReference type="GO" id="GO:0000978">
    <property type="term" value="F:RNA polymerase II cis-regulatory region sequence-specific DNA binding"/>
    <property type="evidence" value="ECO:0007669"/>
    <property type="project" value="InterPro"/>
</dbReference>
<dbReference type="GO" id="GO:0071300">
    <property type="term" value="P:cellular response to retinoic acid"/>
    <property type="evidence" value="ECO:0000250"/>
    <property type="project" value="UniProtKB"/>
</dbReference>
<dbReference type="GO" id="GO:0060788">
    <property type="term" value="P:ectodermal placode formation"/>
    <property type="evidence" value="ECO:0000250"/>
    <property type="project" value="UniProtKB"/>
</dbReference>
<dbReference type="GO" id="GO:0045944">
    <property type="term" value="P:positive regulation of transcription by RNA polymerase II"/>
    <property type="evidence" value="ECO:0000250"/>
    <property type="project" value="UniProtKB"/>
</dbReference>
<dbReference type="GO" id="GO:0050793">
    <property type="term" value="P:regulation of developmental process"/>
    <property type="evidence" value="ECO:0000250"/>
    <property type="project" value="UniProtKB"/>
</dbReference>
<dbReference type="CDD" id="cd20187">
    <property type="entry name" value="T-box_TBX1_10-like"/>
    <property type="match status" value="1"/>
</dbReference>
<dbReference type="FunFam" id="2.60.40.820:FF:000006">
    <property type="entry name" value="T-box transcription factor"/>
    <property type="match status" value="1"/>
</dbReference>
<dbReference type="Gene3D" id="2.60.40.820">
    <property type="entry name" value="Transcription factor, T-box"/>
    <property type="match status" value="1"/>
</dbReference>
<dbReference type="InterPro" id="IPR008967">
    <property type="entry name" value="p53-like_TF_DNA-bd_sf"/>
</dbReference>
<dbReference type="InterPro" id="IPR046360">
    <property type="entry name" value="T-box_DNA-bd"/>
</dbReference>
<dbReference type="InterPro" id="IPR036960">
    <property type="entry name" value="T-box_sf"/>
</dbReference>
<dbReference type="InterPro" id="IPR001699">
    <property type="entry name" value="TF_T-box"/>
</dbReference>
<dbReference type="InterPro" id="IPR018186">
    <property type="entry name" value="TF_T-box_CS"/>
</dbReference>
<dbReference type="PANTHER" id="PTHR11267">
    <property type="entry name" value="T-BOX PROTEIN-RELATED"/>
    <property type="match status" value="1"/>
</dbReference>
<dbReference type="PANTHER" id="PTHR11267:SF104">
    <property type="entry name" value="T-BOX TRANSCRIPTION FACTOR TBX1"/>
    <property type="match status" value="1"/>
</dbReference>
<dbReference type="Pfam" id="PF00907">
    <property type="entry name" value="T-box"/>
    <property type="match status" value="1"/>
</dbReference>
<dbReference type="PRINTS" id="PR00937">
    <property type="entry name" value="TBOX"/>
</dbReference>
<dbReference type="SMART" id="SM00425">
    <property type="entry name" value="TBOX"/>
    <property type="match status" value="1"/>
</dbReference>
<dbReference type="SUPFAM" id="SSF49417">
    <property type="entry name" value="p53-like transcription factors"/>
    <property type="match status" value="1"/>
</dbReference>
<dbReference type="PROSITE" id="PS01283">
    <property type="entry name" value="TBOX_1"/>
    <property type="match status" value="1"/>
</dbReference>
<dbReference type="PROSITE" id="PS01264">
    <property type="entry name" value="TBOX_2"/>
    <property type="match status" value="1"/>
</dbReference>
<dbReference type="PROSITE" id="PS50252">
    <property type="entry name" value="TBOX_3"/>
    <property type="match status" value="1"/>
</dbReference>
<organism>
    <name type="scientific">Xenopus tropicalis</name>
    <name type="common">Western clawed frog</name>
    <name type="synonym">Silurana tropicalis</name>
    <dbReference type="NCBI Taxonomy" id="8364"/>
    <lineage>
        <taxon>Eukaryota</taxon>
        <taxon>Metazoa</taxon>
        <taxon>Chordata</taxon>
        <taxon>Craniata</taxon>
        <taxon>Vertebrata</taxon>
        <taxon>Euteleostomi</taxon>
        <taxon>Amphibia</taxon>
        <taxon>Batrachia</taxon>
        <taxon>Anura</taxon>
        <taxon>Pipoidea</taxon>
        <taxon>Pipidae</taxon>
        <taxon>Xenopodinae</taxon>
        <taxon>Xenopus</taxon>
        <taxon>Silurana</taxon>
    </lineage>
</organism>
<protein>
    <recommendedName>
        <fullName>T-box transcription factor TBX1</fullName>
        <shortName>T-box protein 1</shortName>
    </recommendedName>
</protein>
<sequence>MISAISSPWLTQLSHFCDVAAFTANSLSSLNASGGYHLSPSPGDPYSQHEPHYEPCSASQHSYSFGHACPEPESGASSSSCASSTPGSGSTGSSGSSKAPVKKNPKVANITVQLEMKALWDEFNQLGTEMIVTKAGRRMFPTFQVKIFGMDPMADYMLLMDFVPVDDKRYRYAFHSSSWLVAGKADPATPGRVHYHPDSPAKGAQWMKQIVSFDKLKLTNNLLDDNGHIILNSMHRYQPRFHVVYVDPRKDSEKYAEENFKTFVFEETRFTAVTAYQNHRITQLKIASNPFAKGFRDCDPEDWPRNHRPGSLPLMNAFARSRNPVSSPPQNGSDKDGDGRREYERDTSGTPLHGDAAHQQLMSRVLSPSLPVPGGLVPLSTGRPSPPHELRLDPHSQGSEPLHHHPYKYPTSYDHYLGAKTRPAPYPLPSIRGHGYHHHPMNPAAANMYSGAGAPGSYEYGPR</sequence>
<name>TBX1_XENTR</name>
<comment type="function">
    <text evidence="2 3">Probable transcriptional regulator involved in developmental processes (By similarity). Binds to the palindromic T site 5'-TTCACACCTAGGTGTGAA-3' DNA sequence (By similarity). Induces pre-placodal ectoderm (PPE) gene expression in regions where RIPPLY3 is absent. Plays a role in the formation of the anteroposterior (AP) axis during embryonic development; required to establish the posterolateral border of the pre-placodal ectoderm (PPE) acting downstream of the retinoic acid receptor (RAR) signaling (By similarity).</text>
</comment>
<comment type="subunit">
    <text evidence="1 2">Binds DNA as a dimer (By similarity). Interacts with dscr6/ripply3.</text>
</comment>
<comment type="subcellular location">
    <subcellularLocation>
        <location evidence="4">Nucleus</location>
    </subcellularLocation>
</comment>
<comment type="developmental stage">
    <text evidence="6">In early neurulae (stage 13), regionally restricted expression seen in a broad anterior domain surrounding the anterior end of the mediodorsal groove of the neural plate. Within this broad ectodermal domain, expression seen in two bilateral patches flanking the mediodorsal groove. In late neurulae (stage 19), a strong expression is seen in the anterior ectoderm. At early tail bud stage (stage 25), expressed in three distinct areas within the pharyngeal region and in the ventral region of each otic vesicle. At stage 33, expression within the otic vesicles extends further laterally. However, in subsequent stages (stages 40, 47) expression remains restricted to the ventral and lateral regions of the vesicles.</text>
</comment>
<gene>
    <name type="primary">tbx1</name>
    <name type="ORF">TNeu106g11.1</name>
</gene>
<keyword id="KW-0217">Developmental protein</keyword>
<keyword id="KW-0238">DNA-binding</keyword>
<keyword id="KW-0539">Nucleus</keyword>
<keyword id="KW-1185">Reference proteome</keyword>
<keyword id="KW-0804">Transcription</keyword>
<keyword id="KW-0805">Transcription regulation</keyword>